<gene>
    <name evidence="1" type="primary">zapD</name>
    <name type="ordered locus">azo0730</name>
</gene>
<feature type="chain" id="PRO_1000064890" description="Cell division protein ZapD">
    <location>
        <begin position="1"/>
        <end position="251"/>
    </location>
</feature>
<name>ZAPD_AZOSB</name>
<comment type="function">
    <text evidence="1">Cell division factor that enhances FtsZ-ring assembly. Directly interacts with FtsZ and promotes bundling of FtsZ protofilaments, with a reduction in FtsZ GTPase activity.</text>
</comment>
<comment type="subunit">
    <text evidence="1">Interacts with FtsZ.</text>
</comment>
<comment type="subcellular location">
    <subcellularLocation>
        <location evidence="1">Cytoplasm</location>
    </subcellularLocation>
    <text evidence="1">Localizes to mid-cell in an FtsZ-dependent manner.</text>
</comment>
<comment type="similarity">
    <text evidence="1">Belongs to the ZapD family.</text>
</comment>
<sequence>MISYEYPLSERIRTLLRLEDLFRKVAHFGGSEAPLDHHVALLTIFEILEVASRADLKVDLVQELERQRQILLSFRNNPEISEEALAGALYEIEQASTALLSMAGKIGQYLRENEWLMGIRSRAAIPGGVCQFDLPSYHFWLNRDAAERRHDLDAWIMPMTPIRDGIEIVMRLLRSSGRPEQQRARAGTYQLTMAGRVAQMLRVRIPRSEAVVPEISANKYALNIRFMLPETVARPRVAEREITFELTFCTL</sequence>
<protein>
    <recommendedName>
        <fullName evidence="1">Cell division protein ZapD</fullName>
    </recommendedName>
    <alternativeName>
        <fullName evidence="1">Z ring-associated protein D</fullName>
    </alternativeName>
</protein>
<accession>A1K3E2</accession>
<evidence type="ECO:0000255" key="1">
    <source>
        <dbReference type="HAMAP-Rule" id="MF_01092"/>
    </source>
</evidence>
<keyword id="KW-0131">Cell cycle</keyword>
<keyword id="KW-0132">Cell division</keyword>
<keyword id="KW-0963">Cytoplasm</keyword>
<keyword id="KW-1185">Reference proteome</keyword>
<keyword id="KW-0717">Septation</keyword>
<dbReference type="EMBL" id="AM406670">
    <property type="protein sequence ID" value="CAL93347.1"/>
    <property type="molecule type" value="Genomic_DNA"/>
</dbReference>
<dbReference type="RefSeq" id="WP_011764464.1">
    <property type="nucleotide sequence ID" value="NC_008702.1"/>
</dbReference>
<dbReference type="SMR" id="A1K3E2"/>
<dbReference type="STRING" id="62928.azo0730"/>
<dbReference type="KEGG" id="aoa:dqs_0804"/>
<dbReference type="KEGG" id="azo:azo0730"/>
<dbReference type="eggNOG" id="COG4582">
    <property type="taxonomic scope" value="Bacteria"/>
</dbReference>
<dbReference type="HOGENOM" id="CLU_076303_0_1_4"/>
<dbReference type="OrthoDB" id="5294622at2"/>
<dbReference type="Proteomes" id="UP000002588">
    <property type="component" value="Chromosome"/>
</dbReference>
<dbReference type="GO" id="GO:0032153">
    <property type="term" value="C:cell division site"/>
    <property type="evidence" value="ECO:0007669"/>
    <property type="project" value="TreeGrafter"/>
</dbReference>
<dbReference type="GO" id="GO:0005737">
    <property type="term" value="C:cytoplasm"/>
    <property type="evidence" value="ECO:0007669"/>
    <property type="project" value="UniProtKB-SubCell"/>
</dbReference>
<dbReference type="GO" id="GO:0000917">
    <property type="term" value="P:division septum assembly"/>
    <property type="evidence" value="ECO:0007669"/>
    <property type="project" value="UniProtKB-KW"/>
</dbReference>
<dbReference type="GO" id="GO:0043093">
    <property type="term" value="P:FtsZ-dependent cytokinesis"/>
    <property type="evidence" value="ECO:0007669"/>
    <property type="project" value="UniProtKB-UniRule"/>
</dbReference>
<dbReference type="Gene3D" id="1.10.3900.10">
    <property type="entry name" value="YacF-like"/>
    <property type="match status" value="1"/>
</dbReference>
<dbReference type="Gene3D" id="2.60.440.10">
    <property type="entry name" value="YacF-like domains"/>
    <property type="match status" value="1"/>
</dbReference>
<dbReference type="HAMAP" id="MF_01092">
    <property type="entry name" value="ZapD"/>
    <property type="match status" value="1"/>
</dbReference>
<dbReference type="InterPro" id="IPR009777">
    <property type="entry name" value="ZapD"/>
</dbReference>
<dbReference type="InterPro" id="IPR027462">
    <property type="entry name" value="ZapD_C"/>
</dbReference>
<dbReference type="InterPro" id="IPR036268">
    <property type="entry name" value="ZapD_sf"/>
</dbReference>
<dbReference type="NCBIfam" id="NF003656">
    <property type="entry name" value="PRK05287.1-4"/>
    <property type="match status" value="1"/>
</dbReference>
<dbReference type="PANTHER" id="PTHR39455">
    <property type="entry name" value="CELL DIVISION PROTEIN ZAPD"/>
    <property type="match status" value="1"/>
</dbReference>
<dbReference type="PANTHER" id="PTHR39455:SF1">
    <property type="entry name" value="CELL DIVISION PROTEIN ZAPD"/>
    <property type="match status" value="1"/>
</dbReference>
<dbReference type="Pfam" id="PF07072">
    <property type="entry name" value="ZapD"/>
    <property type="match status" value="1"/>
</dbReference>
<dbReference type="SUPFAM" id="SSF160950">
    <property type="entry name" value="YacF-like"/>
    <property type="match status" value="1"/>
</dbReference>
<organism>
    <name type="scientific">Azoarcus sp. (strain BH72)</name>
    <dbReference type="NCBI Taxonomy" id="418699"/>
    <lineage>
        <taxon>Bacteria</taxon>
        <taxon>Pseudomonadati</taxon>
        <taxon>Pseudomonadota</taxon>
        <taxon>Betaproteobacteria</taxon>
        <taxon>Rhodocyclales</taxon>
        <taxon>Zoogloeaceae</taxon>
        <taxon>Azoarcus</taxon>
    </lineage>
</organism>
<proteinExistence type="inferred from homology"/>
<reference key="1">
    <citation type="journal article" date="2006" name="Nat. Biotechnol.">
        <title>Complete genome of the mutualistic, N2-fixing grass endophyte Azoarcus sp. strain BH72.</title>
        <authorList>
            <person name="Krause A."/>
            <person name="Ramakumar A."/>
            <person name="Bartels D."/>
            <person name="Battistoni F."/>
            <person name="Bekel T."/>
            <person name="Boch J."/>
            <person name="Boehm M."/>
            <person name="Friedrich F."/>
            <person name="Hurek T."/>
            <person name="Krause L."/>
            <person name="Linke B."/>
            <person name="McHardy A.C."/>
            <person name="Sarkar A."/>
            <person name="Schneiker S."/>
            <person name="Syed A.A."/>
            <person name="Thauer R."/>
            <person name="Vorhoelter F.-J."/>
            <person name="Weidner S."/>
            <person name="Puehler A."/>
            <person name="Reinhold-Hurek B."/>
            <person name="Kaiser O."/>
            <person name="Goesmann A."/>
        </authorList>
    </citation>
    <scope>NUCLEOTIDE SEQUENCE [LARGE SCALE GENOMIC DNA]</scope>
    <source>
        <strain>BH72</strain>
    </source>
</reference>